<evidence type="ECO:0000255" key="1">
    <source>
        <dbReference type="HAMAP-Rule" id="MF_01849"/>
    </source>
</evidence>
<evidence type="ECO:0000255" key="2">
    <source>
        <dbReference type="PROSITE-ProRule" id="PRU01266"/>
    </source>
</evidence>
<evidence type="ECO:0000256" key="3">
    <source>
        <dbReference type="SAM" id="MobiDB-lite"/>
    </source>
</evidence>
<organism>
    <name type="scientific">Methylibium petroleiphilum (strain ATCC BAA-1232 / LMG 22953 / PM1)</name>
    <dbReference type="NCBI Taxonomy" id="420662"/>
    <lineage>
        <taxon>Bacteria</taxon>
        <taxon>Pseudomonadati</taxon>
        <taxon>Pseudomonadota</taxon>
        <taxon>Betaproteobacteria</taxon>
        <taxon>Burkholderiales</taxon>
        <taxon>Sphaerotilaceae</taxon>
        <taxon>Methylibium</taxon>
    </lineage>
</organism>
<accession>A2SHB8</accession>
<comment type="function">
    <text evidence="1">Specifically methylates position 2 of adenine 2503 in 23S rRNA and position 2 of adenine 37 in tRNAs. m2A2503 modification seems to play a crucial role in the proofreading step occurring at the peptidyl transferase center and thus would serve to optimize ribosomal fidelity.</text>
</comment>
<comment type="catalytic activity">
    <reaction evidence="1">
        <text>adenosine(2503) in 23S rRNA + 2 reduced [2Fe-2S]-[ferredoxin] + 2 S-adenosyl-L-methionine = 2-methyladenosine(2503) in 23S rRNA + 5'-deoxyadenosine + L-methionine + 2 oxidized [2Fe-2S]-[ferredoxin] + S-adenosyl-L-homocysteine</text>
        <dbReference type="Rhea" id="RHEA:42916"/>
        <dbReference type="Rhea" id="RHEA-COMP:10000"/>
        <dbReference type="Rhea" id="RHEA-COMP:10001"/>
        <dbReference type="Rhea" id="RHEA-COMP:10152"/>
        <dbReference type="Rhea" id="RHEA-COMP:10282"/>
        <dbReference type="ChEBI" id="CHEBI:17319"/>
        <dbReference type="ChEBI" id="CHEBI:33737"/>
        <dbReference type="ChEBI" id="CHEBI:33738"/>
        <dbReference type="ChEBI" id="CHEBI:57844"/>
        <dbReference type="ChEBI" id="CHEBI:57856"/>
        <dbReference type="ChEBI" id="CHEBI:59789"/>
        <dbReference type="ChEBI" id="CHEBI:74411"/>
        <dbReference type="ChEBI" id="CHEBI:74497"/>
        <dbReference type="EC" id="2.1.1.192"/>
    </reaction>
</comment>
<comment type="catalytic activity">
    <reaction evidence="1">
        <text>adenosine(37) in tRNA + 2 reduced [2Fe-2S]-[ferredoxin] + 2 S-adenosyl-L-methionine = 2-methyladenosine(37) in tRNA + 5'-deoxyadenosine + L-methionine + 2 oxidized [2Fe-2S]-[ferredoxin] + S-adenosyl-L-homocysteine</text>
        <dbReference type="Rhea" id="RHEA:43332"/>
        <dbReference type="Rhea" id="RHEA-COMP:10000"/>
        <dbReference type="Rhea" id="RHEA-COMP:10001"/>
        <dbReference type="Rhea" id="RHEA-COMP:10162"/>
        <dbReference type="Rhea" id="RHEA-COMP:10485"/>
        <dbReference type="ChEBI" id="CHEBI:17319"/>
        <dbReference type="ChEBI" id="CHEBI:33737"/>
        <dbReference type="ChEBI" id="CHEBI:33738"/>
        <dbReference type="ChEBI" id="CHEBI:57844"/>
        <dbReference type="ChEBI" id="CHEBI:57856"/>
        <dbReference type="ChEBI" id="CHEBI:59789"/>
        <dbReference type="ChEBI" id="CHEBI:74411"/>
        <dbReference type="ChEBI" id="CHEBI:74497"/>
        <dbReference type="EC" id="2.1.1.192"/>
    </reaction>
</comment>
<comment type="cofactor">
    <cofactor evidence="1">
        <name>[4Fe-4S] cluster</name>
        <dbReference type="ChEBI" id="CHEBI:49883"/>
    </cofactor>
    <text evidence="1">Binds 1 [4Fe-4S] cluster. The cluster is coordinated with 3 cysteines and an exchangeable S-adenosyl-L-methionine.</text>
</comment>
<comment type="subcellular location">
    <subcellularLocation>
        <location evidence="1">Cytoplasm</location>
    </subcellularLocation>
</comment>
<comment type="miscellaneous">
    <text evidence="1">Reaction proceeds by a ping-pong mechanism involving intermediate methylation of a conserved cysteine residue.</text>
</comment>
<comment type="similarity">
    <text evidence="1">Belongs to the radical SAM superfamily. RlmN family.</text>
</comment>
<name>RLMN_METPP</name>
<reference key="1">
    <citation type="journal article" date="2007" name="J. Bacteriol.">
        <title>Whole-genome analysis of the methyl tert-butyl ether-degrading beta-proteobacterium Methylibium petroleiphilum PM1.</title>
        <authorList>
            <person name="Kane S.R."/>
            <person name="Chakicherla A.Y."/>
            <person name="Chain P.S.G."/>
            <person name="Schmidt R."/>
            <person name="Shin M.W."/>
            <person name="Legler T.C."/>
            <person name="Scow K.M."/>
            <person name="Larimer F.W."/>
            <person name="Lucas S.M."/>
            <person name="Richardson P.M."/>
            <person name="Hristova K.R."/>
        </authorList>
    </citation>
    <scope>NUCLEOTIDE SEQUENCE [LARGE SCALE GENOMIC DNA]</scope>
    <source>
        <strain>ATCC BAA-1232 / LMG 22953 / PM1</strain>
    </source>
</reference>
<protein>
    <recommendedName>
        <fullName evidence="1">Dual-specificity RNA methyltransferase RlmN</fullName>
        <ecNumber evidence="1">2.1.1.192</ecNumber>
    </recommendedName>
    <alternativeName>
        <fullName evidence="1">23S rRNA (adenine(2503)-C(2))-methyltransferase</fullName>
    </alternativeName>
    <alternativeName>
        <fullName evidence="1">23S rRNA m2A2503 methyltransferase</fullName>
    </alternativeName>
    <alternativeName>
        <fullName evidence="1">Ribosomal RNA large subunit methyltransferase N</fullName>
    </alternativeName>
    <alternativeName>
        <fullName evidence="1">tRNA (adenine(37)-C(2))-methyltransferase</fullName>
    </alternativeName>
    <alternativeName>
        <fullName evidence="1">tRNA m2A37 methyltransferase</fullName>
    </alternativeName>
</protein>
<gene>
    <name evidence="1" type="primary">rlmN</name>
    <name type="ordered locus">Mpe_A1999</name>
</gene>
<sequence>MTAANLLEFDLDALAAFCEQLGEKRFRATQLFRWIHQKGQSDFAQMSDLAKSLREKLAGRAVVRPLAVLSEHVSADGTVKWLFDVGGGNAVETVFIPENDRGTLCISSQAGCAVGCRFCSTGHQGFSRNLSTGEIVAQLWHAEHQLRARLGTTERVISNVVMMGMGEPLQNYAALLPALRVMLDDHGYGLSRRRVTVSTSGVVPMIDRLREDCPVALAVSLHAPTDALRDDLVPLNRKYPIAELLEACQRYLEAAPRDFITFEYCMLDGVNDSEAQARELLRLVGERGPVGRVPCKINLIPFNPFPASGLTRSSVARVQAFAQLLVDGGLVTTVRRTRGDDIDAACGQLAGEVQDRTNAQARMRRAPIAIRPIDSAVQRRADAAPSGSATETTR</sequence>
<keyword id="KW-0004">4Fe-4S</keyword>
<keyword id="KW-0963">Cytoplasm</keyword>
<keyword id="KW-1015">Disulfide bond</keyword>
<keyword id="KW-0408">Iron</keyword>
<keyword id="KW-0411">Iron-sulfur</keyword>
<keyword id="KW-0479">Metal-binding</keyword>
<keyword id="KW-0489">Methyltransferase</keyword>
<keyword id="KW-1185">Reference proteome</keyword>
<keyword id="KW-0698">rRNA processing</keyword>
<keyword id="KW-0949">S-adenosyl-L-methionine</keyword>
<keyword id="KW-0808">Transferase</keyword>
<keyword id="KW-0819">tRNA processing</keyword>
<feature type="chain" id="PRO_0000350250" description="Dual-specificity RNA methyltransferase RlmN">
    <location>
        <begin position="1"/>
        <end position="394"/>
    </location>
</feature>
<feature type="domain" description="Radical SAM core" evidence="2">
    <location>
        <begin position="98"/>
        <end position="341"/>
    </location>
</feature>
<feature type="region of interest" description="Disordered" evidence="3">
    <location>
        <begin position="374"/>
        <end position="394"/>
    </location>
</feature>
<feature type="active site" description="Proton acceptor" evidence="1">
    <location>
        <position position="92"/>
    </location>
</feature>
<feature type="active site" description="S-methylcysteine intermediate" evidence="1">
    <location>
        <position position="346"/>
    </location>
</feature>
<feature type="binding site" evidence="1">
    <location>
        <position position="112"/>
    </location>
    <ligand>
        <name>[4Fe-4S] cluster</name>
        <dbReference type="ChEBI" id="CHEBI:49883"/>
        <note>4Fe-4S-S-AdoMet</note>
    </ligand>
</feature>
<feature type="binding site" evidence="1">
    <location>
        <position position="116"/>
    </location>
    <ligand>
        <name>[4Fe-4S] cluster</name>
        <dbReference type="ChEBI" id="CHEBI:49883"/>
        <note>4Fe-4S-S-AdoMet</note>
    </ligand>
</feature>
<feature type="binding site" evidence="1">
    <location>
        <position position="119"/>
    </location>
    <ligand>
        <name>[4Fe-4S] cluster</name>
        <dbReference type="ChEBI" id="CHEBI:49883"/>
        <note>4Fe-4S-S-AdoMet</note>
    </ligand>
</feature>
<feature type="binding site" evidence="1">
    <location>
        <begin position="166"/>
        <end position="167"/>
    </location>
    <ligand>
        <name>S-adenosyl-L-methionine</name>
        <dbReference type="ChEBI" id="CHEBI:59789"/>
    </ligand>
</feature>
<feature type="binding site" evidence="1">
    <location>
        <position position="198"/>
    </location>
    <ligand>
        <name>S-adenosyl-L-methionine</name>
        <dbReference type="ChEBI" id="CHEBI:59789"/>
    </ligand>
</feature>
<feature type="binding site" evidence="1">
    <location>
        <begin position="220"/>
        <end position="222"/>
    </location>
    <ligand>
        <name>S-adenosyl-L-methionine</name>
        <dbReference type="ChEBI" id="CHEBI:59789"/>
    </ligand>
</feature>
<feature type="binding site" evidence="1">
    <location>
        <position position="303"/>
    </location>
    <ligand>
        <name>S-adenosyl-L-methionine</name>
        <dbReference type="ChEBI" id="CHEBI:59789"/>
    </ligand>
</feature>
<feature type="disulfide bond" description="(transient)" evidence="1">
    <location>
        <begin position="105"/>
        <end position="346"/>
    </location>
</feature>
<proteinExistence type="inferred from homology"/>
<dbReference type="EC" id="2.1.1.192" evidence="1"/>
<dbReference type="EMBL" id="CP000555">
    <property type="protein sequence ID" value="ABM94957.1"/>
    <property type="molecule type" value="Genomic_DNA"/>
</dbReference>
<dbReference type="RefSeq" id="WP_011829594.1">
    <property type="nucleotide sequence ID" value="NC_008825.1"/>
</dbReference>
<dbReference type="SMR" id="A2SHB8"/>
<dbReference type="STRING" id="420662.Mpe_A1999"/>
<dbReference type="KEGG" id="mpt:Mpe_A1999"/>
<dbReference type="eggNOG" id="COG0820">
    <property type="taxonomic scope" value="Bacteria"/>
</dbReference>
<dbReference type="HOGENOM" id="CLU_029101_0_0_4"/>
<dbReference type="Proteomes" id="UP000000366">
    <property type="component" value="Chromosome"/>
</dbReference>
<dbReference type="GO" id="GO:0005737">
    <property type="term" value="C:cytoplasm"/>
    <property type="evidence" value="ECO:0007669"/>
    <property type="project" value="UniProtKB-SubCell"/>
</dbReference>
<dbReference type="GO" id="GO:0051539">
    <property type="term" value="F:4 iron, 4 sulfur cluster binding"/>
    <property type="evidence" value="ECO:0007669"/>
    <property type="project" value="UniProtKB-UniRule"/>
</dbReference>
<dbReference type="GO" id="GO:0046872">
    <property type="term" value="F:metal ion binding"/>
    <property type="evidence" value="ECO:0007669"/>
    <property type="project" value="UniProtKB-KW"/>
</dbReference>
<dbReference type="GO" id="GO:0070040">
    <property type="term" value="F:rRNA (adenine(2503)-C2-)-methyltransferase activity"/>
    <property type="evidence" value="ECO:0007669"/>
    <property type="project" value="UniProtKB-UniRule"/>
</dbReference>
<dbReference type="GO" id="GO:0019843">
    <property type="term" value="F:rRNA binding"/>
    <property type="evidence" value="ECO:0007669"/>
    <property type="project" value="UniProtKB-UniRule"/>
</dbReference>
<dbReference type="GO" id="GO:0002935">
    <property type="term" value="F:tRNA (adenine(37)-C2)-methyltransferase activity"/>
    <property type="evidence" value="ECO:0007669"/>
    <property type="project" value="UniProtKB-UniRule"/>
</dbReference>
<dbReference type="GO" id="GO:0000049">
    <property type="term" value="F:tRNA binding"/>
    <property type="evidence" value="ECO:0007669"/>
    <property type="project" value="UniProtKB-UniRule"/>
</dbReference>
<dbReference type="GO" id="GO:0070475">
    <property type="term" value="P:rRNA base methylation"/>
    <property type="evidence" value="ECO:0007669"/>
    <property type="project" value="UniProtKB-UniRule"/>
</dbReference>
<dbReference type="GO" id="GO:0030488">
    <property type="term" value="P:tRNA methylation"/>
    <property type="evidence" value="ECO:0007669"/>
    <property type="project" value="UniProtKB-UniRule"/>
</dbReference>
<dbReference type="CDD" id="cd01335">
    <property type="entry name" value="Radical_SAM"/>
    <property type="match status" value="1"/>
</dbReference>
<dbReference type="FunFam" id="1.10.150.530:FF:000003">
    <property type="entry name" value="Dual-specificity RNA methyltransferase RlmN"/>
    <property type="match status" value="1"/>
</dbReference>
<dbReference type="FunFam" id="3.20.20.70:FF:000008">
    <property type="entry name" value="Dual-specificity RNA methyltransferase RlmN"/>
    <property type="match status" value="1"/>
</dbReference>
<dbReference type="Gene3D" id="1.10.150.530">
    <property type="match status" value="1"/>
</dbReference>
<dbReference type="Gene3D" id="3.20.20.70">
    <property type="entry name" value="Aldolase class I"/>
    <property type="match status" value="1"/>
</dbReference>
<dbReference type="HAMAP" id="MF_01849">
    <property type="entry name" value="RNA_methyltr_RlmN"/>
    <property type="match status" value="1"/>
</dbReference>
<dbReference type="InterPro" id="IPR013785">
    <property type="entry name" value="Aldolase_TIM"/>
</dbReference>
<dbReference type="InterPro" id="IPR040072">
    <property type="entry name" value="Methyltransferase_A"/>
</dbReference>
<dbReference type="InterPro" id="IPR048641">
    <property type="entry name" value="RlmN_N"/>
</dbReference>
<dbReference type="InterPro" id="IPR027492">
    <property type="entry name" value="RNA_MTrfase_RlmN"/>
</dbReference>
<dbReference type="InterPro" id="IPR004383">
    <property type="entry name" value="rRNA_lsu_MTrfase_RlmN/Cfr"/>
</dbReference>
<dbReference type="InterPro" id="IPR007197">
    <property type="entry name" value="rSAM"/>
</dbReference>
<dbReference type="NCBIfam" id="TIGR00048">
    <property type="entry name" value="rRNA_mod_RlmN"/>
    <property type="match status" value="1"/>
</dbReference>
<dbReference type="PANTHER" id="PTHR30544">
    <property type="entry name" value="23S RRNA METHYLTRANSFERASE"/>
    <property type="match status" value="1"/>
</dbReference>
<dbReference type="PANTHER" id="PTHR30544:SF5">
    <property type="entry name" value="RADICAL SAM CORE DOMAIN-CONTAINING PROTEIN"/>
    <property type="match status" value="1"/>
</dbReference>
<dbReference type="Pfam" id="PF04055">
    <property type="entry name" value="Radical_SAM"/>
    <property type="match status" value="1"/>
</dbReference>
<dbReference type="Pfam" id="PF21016">
    <property type="entry name" value="RlmN_N"/>
    <property type="match status" value="1"/>
</dbReference>
<dbReference type="PIRSF" id="PIRSF006004">
    <property type="entry name" value="CHP00048"/>
    <property type="match status" value="1"/>
</dbReference>
<dbReference type="SFLD" id="SFLDF00275">
    <property type="entry name" value="adenosine_C2_methyltransferase"/>
    <property type="match status" value="1"/>
</dbReference>
<dbReference type="SFLD" id="SFLDS00029">
    <property type="entry name" value="Radical_SAM"/>
    <property type="match status" value="1"/>
</dbReference>
<dbReference type="SUPFAM" id="SSF102114">
    <property type="entry name" value="Radical SAM enzymes"/>
    <property type="match status" value="1"/>
</dbReference>
<dbReference type="PROSITE" id="PS51918">
    <property type="entry name" value="RADICAL_SAM"/>
    <property type="match status" value="1"/>
</dbReference>